<protein>
    <recommendedName>
        <fullName>Ig kappa chain V-II region 2S1.3</fullName>
    </recommendedName>
</protein>
<feature type="chain" id="PRO_0000059773" description="Ig kappa chain V-II region 2S1.3">
    <location>
        <begin position="1"/>
        <end position="112" status="greater than"/>
    </location>
</feature>
<feature type="region of interest" description="Framework-1">
    <location>
        <begin position="1"/>
        <end position="23"/>
    </location>
</feature>
<feature type="region of interest" description="Complementarity-determining-1">
    <location>
        <begin position="24"/>
        <end position="39"/>
    </location>
</feature>
<feature type="region of interest" description="Framework-2">
    <location>
        <begin position="40"/>
        <end position="54"/>
    </location>
</feature>
<feature type="region of interest" description="Complementarity-determining-2">
    <location>
        <begin position="55"/>
        <end position="61"/>
    </location>
</feature>
<feature type="region of interest" description="Framework-3">
    <location>
        <begin position="62"/>
        <end position="93"/>
    </location>
</feature>
<feature type="region of interest" description="Complementarity-determining-3">
    <location>
        <begin position="94"/>
        <end position="102"/>
    </location>
</feature>
<feature type="region of interest" description="Framework-4">
    <location>
        <begin position="103"/>
        <end position="112"/>
    </location>
</feature>
<feature type="disulfide bond" evidence="1">
    <location>
        <begin position="23"/>
        <end position="93"/>
    </location>
</feature>
<feature type="non-terminal residue">
    <location>
        <position position="112"/>
    </location>
</feature>
<proteinExistence type="evidence at protein level"/>
<sequence>DIVMTQAAFSNPVTLGTSASFSCRSSKSLQQSKGITYLYWYLQKPGQSPQLLIYQMSNLASGVPDRFSGSGSGTDFTLRISRVEAEDVGVYYCANLQELPYTFGGGTKLEIK</sequence>
<name>KV2A4_MOUSE</name>
<accession>P01629</accession>
<reference key="1">
    <citation type="journal article" date="1982" name="Hoppe-Seyler's Z. Physiol. Chem.">
        <title>Murine VK25 isotype sequence: monoclonal antibody 2S1.3 specific for the group A streptococcal polysaccharide.</title>
        <authorList>
            <person name="Herbst H."/>
            <person name="Chang J.Y."/>
            <person name="Aebersold R."/>
            <person name="Braun D.G."/>
        </authorList>
    </citation>
    <scope>PROTEIN SEQUENCE</scope>
</reference>
<dbReference type="PIR" id="A01911">
    <property type="entry name" value="KVMSS1"/>
</dbReference>
<dbReference type="SMR" id="P01629"/>
<dbReference type="FunCoup" id="P01629">
    <property type="interactions" value="477"/>
</dbReference>
<dbReference type="InParanoid" id="P01629"/>
<dbReference type="Proteomes" id="UP000000589">
    <property type="component" value="Unplaced"/>
</dbReference>
<dbReference type="RNAct" id="P01629">
    <property type="molecule type" value="protein"/>
</dbReference>
<dbReference type="GO" id="GO:0019814">
    <property type="term" value="C:immunoglobulin complex"/>
    <property type="evidence" value="ECO:0000318"/>
    <property type="project" value="GO_Central"/>
</dbReference>
<dbReference type="GO" id="GO:0003823">
    <property type="term" value="F:antigen binding"/>
    <property type="evidence" value="ECO:0007669"/>
    <property type="project" value="UniProtKB-KW"/>
</dbReference>
<dbReference type="GO" id="GO:0002250">
    <property type="term" value="P:adaptive immune response"/>
    <property type="evidence" value="ECO:0007669"/>
    <property type="project" value="UniProtKB-KW"/>
</dbReference>
<dbReference type="GO" id="GO:0006955">
    <property type="term" value="P:immune response"/>
    <property type="evidence" value="ECO:0000318"/>
    <property type="project" value="GO_Central"/>
</dbReference>
<dbReference type="FunFam" id="2.60.40.10:FF:000365">
    <property type="entry name" value="If kappa light chain"/>
    <property type="match status" value="1"/>
</dbReference>
<dbReference type="Gene3D" id="2.60.40.10">
    <property type="entry name" value="Immunoglobulins"/>
    <property type="match status" value="1"/>
</dbReference>
<dbReference type="InterPro" id="IPR007110">
    <property type="entry name" value="Ig-like_dom"/>
</dbReference>
<dbReference type="InterPro" id="IPR036179">
    <property type="entry name" value="Ig-like_dom_sf"/>
</dbReference>
<dbReference type="InterPro" id="IPR013783">
    <property type="entry name" value="Ig-like_fold"/>
</dbReference>
<dbReference type="InterPro" id="IPR003599">
    <property type="entry name" value="Ig_sub"/>
</dbReference>
<dbReference type="InterPro" id="IPR013106">
    <property type="entry name" value="Ig_V-set"/>
</dbReference>
<dbReference type="InterPro" id="IPR050150">
    <property type="entry name" value="IgV_Light_Chain"/>
</dbReference>
<dbReference type="PANTHER" id="PTHR23267">
    <property type="entry name" value="IMMUNOGLOBULIN LIGHT CHAIN"/>
    <property type="match status" value="1"/>
</dbReference>
<dbReference type="Pfam" id="PF07686">
    <property type="entry name" value="V-set"/>
    <property type="match status" value="1"/>
</dbReference>
<dbReference type="SMART" id="SM00409">
    <property type="entry name" value="IG"/>
    <property type="match status" value="1"/>
</dbReference>
<dbReference type="SMART" id="SM00406">
    <property type="entry name" value="IGv"/>
    <property type="match status" value="1"/>
</dbReference>
<dbReference type="SUPFAM" id="SSF48726">
    <property type="entry name" value="Immunoglobulin"/>
    <property type="match status" value="1"/>
</dbReference>
<dbReference type="PROSITE" id="PS50835">
    <property type="entry name" value="IG_LIKE"/>
    <property type="match status" value="1"/>
</dbReference>
<comment type="miscellaneous">
    <text>This chain is from a hybridoma-derived monoclonal antibody against the streptococcal group A polysaccharide.</text>
</comment>
<keyword id="KW-1064">Adaptive immunity</keyword>
<keyword id="KW-0903">Direct protein sequencing</keyword>
<keyword id="KW-1015">Disulfide bond</keyword>
<keyword id="KW-0391">Immunity</keyword>
<keyword id="KW-1280">Immunoglobulin</keyword>
<keyword id="KW-0502">Monoclonal antibody</keyword>
<keyword id="KW-1185">Reference proteome</keyword>
<organism>
    <name type="scientific">Mus musculus</name>
    <name type="common">Mouse</name>
    <dbReference type="NCBI Taxonomy" id="10090"/>
    <lineage>
        <taxon>Eukaryota</taxon>
        <taxon>Metazoa</taxon>
        <taxon>Chordata</taxon>
        <taxon>Craniata</taxon>
        <taxon>Vertebrata</taxon>
        <taxon>Euteleostomi</taxon>
        <taxon>Mammalia</taxon>
        <taxon>Eutheria</taxon>
        <taxon>Euarchontoglires</taxon>
        <taxon>Glires</taxon>
        <taxon>Rodentia</taxon>
        <taxon>Myomorpha</taxon>
        <taxon>Muroidea</taxon>
        <taxon>Muridae</taxon>
        <taxon>Murinae</taxon>
        <taxon>Mus</taxon>
        <taxon>Mus</taxon>
    </lineage>
</organism>
<evidence type="ECO:0000255" key="1">
    <source>
        <dbReference type="PROSITE-ProRule" id="PRU00114"/>
    </source>
</evidence>